<evidence type="ECO:0000250" key="1"/>
<evidence type="ECO:0000255" key="2"/>
<evidence type="ECO:0000269" key="3">
    <source>
    </source>
</evidence>
<evidence type="ECO:0000305" key="4"/>
<evidence type="ECO:0007829" key="5">
    <source>
        <dbReference type="PDB" id="6K61"/>
    </source>
</evidence>
<dbReference type="EMBL" id="BA000019">
    <property type="protein sequence ID" value="BAB77633.1"/>
    <property type="molecule type" value="Genomic_DNA"/>
</dbReference>
<dbReference type="PIR" id="AE1820">
    <property type="entry name" value="AE1820"/>
</dbReference>
<dbReference type="RefSeq" id="WP_010994286.1">
    <property type="nucleotide sequence ID" value="NZ_RSCN01000016.1"/>
</dbReference>
<dbReference type="PDB" id="6JEO">
    <property type="method" value="EM"/>
    <property type="resolution" value="3.30 A"/>
    <property type="chains" value="aF/bF/cF/dF=1-164"/>
</dbReference>
<dbReference type="PDB" id="6K61">
    <property type="method" value="EM"/>
    <property type="resolution" value="2.37 A"/>
    <property type="chains" value="F/f=1-164"/>
</dbReference>
<dbReference type="PDB" id="6TCL">
    <property type="method" value="EM"/>
    <property type="resolution" value="3.20 A"/>
    <property type="chains" value="F/F1/FF=25-163, F2=25-161"/>
</dbReference>
<dbReference type="PDB" id="7Y3F">
    <property type="method" value="EM"/>
    <property type="resolution" value="2.62 A"/>
    <property type="chains" value="F=1-164"/>
</dbReference>
<dbReference type="PDBsum" id="6JEO"/>
<dbReference type="PDBsum" id="6K61"/>
<dbReference type="PDBsum" id="6TCL"/>
<dbReference type="PDBsum" id="7Y3F"/>
<dbReference type="EMDB" id="EMD-10461"/>
<dbReference type="EMDB" id="EMD-33593"/>
<dbReference type="EMDB" id="EMD-9807"/>
<dbReference type="EMDB" id="EMD-9918"/>
<dbReference type="SMR" id="P58564"/>
<dbReference type="STRING" id="103690.gene:10492113"/>
<dbReference type="KEGG" id="ana:all0109"/>
<dbReference type="eggNOG" id="ENOG502ZBQN">
    <property type="taxonomic scope" value="Bacteria"/>
</dbReference>
<dbReference type="OrthoDB" id="512859at2"/>
<dbReference type="Proteomes" id="UP000002483">
    <property type="component" value="Chromosome"/>
</dbReference>
<dbReference type="GO" id="GO:0009538">
    <property type="term" value="C:photosystem I reaction center"/>
    <property type="evidence" value="ECO:0007669"/>
    <property type="project" value="InterPro"/>
</dbReference>
<dbReference type="GO" id="GO:0031676">
    <property type="term" value="C:plasma membrane-derived thylakoid membrane"/>
    <property type="evidence" value="ECO:0007669"/>
    <property type="project" value="UniProtKB-SubCell"/>
</dbReference>
<dbReference type="GO" id="GO:0015979">
    <property type="term" value="P:photosynthesis"/>
    <property type="evidence" value="ECO:0007669"/>
    <property type="project" value="UniProtKB-KW"/>
</dbReference>
<dbReference type="Gene3D" id="1.10.8.110">
    <property type="entry name" value="Photosystem I PsaF, reaction centre subunit III"/>
    <property type="match status" value="1"/>
</dbReference>
<dbReference type="InterPro" id="IPR003666">
    <property type="entry name" value="PSI_PsaF"/>
</dbReference>
<dbReference type="InterPro" id="IPR036577">
    <property type="entry name" value="PSI_PsaF_sf"/>
</dbReference>
<dbReference type="PANTHER" id="PTHR34939">
    <property type="entry name" value="PHOTOSYSTEM I REACTION CENTER SUBUNIT III, CHLOROPLASTIC"/>
    <property type="match status" value="1"/>
</dbReference>
<dbReference type="PANTHER" id="PTHR34939:SF1">
    <property type="entry name" value="PHOTOSYSTEM I REACTION CENTER SUBUNIT III, CHLOROPLASTIC"/>
    <property type="match status" value="1"/>
</dbReference>
<dbReference type="Pfam" id="PF02507">
    <property type="entry name" value="PSI_PsaF"/>
    <property type="match status" value="1"/>
</dbReference>
<dbReference type="SUPFAM" id="SSF81536">
    <property type="entry name" value="Subunit III of photosystem I reaction centre, PsaF"/>
    <property type="match status" value="1"/>
</dbReference>
<comment type="function">
    <text>Probably participates in efficiency of electron transfer from plastocyanin to P700 (or cytochrome c553 in algae and cyanobacteria). This plastocyanin-docking protein contributes to the specific association of plastocyanin to PSI.</text>
</comment>
<comment type="subunit">
    <text evidence="3">The cyanobacterial PSI reaction center is composed of one copy each of PsaA,B,C,D,E,F,I,J,K,L,M and X, and forms dimeric and tetrameric complexes.</text>
</comment>
<comment type="subcellular location">
    <subcellularLocation>
        <location evidence="3">Cellular thylakoid membrane</location>
        <topology evidence="1">Multi-pass membrane protein</topology>
    </subcellularLocation>
</comment>
<comment type="similarity">
    <text evidence="4">Belongs to the PsaF family.</text>
</comment>
<proteinExistence type="evidence at protein level"/>
<organism>
    <name type="scientific">Nostoc sp. (strain PCC 7120 / SAG 25.82 / UTEX 2576)</name>
    <dbReference type="NCBI Taxonomy" id="103690"/>
    <lineage>
        <taxon>Bacteria</taxon>
        <taxon>Bacillati</taxon>
        <taxon>Cyanobacteriota</taxon>
        <taxon>Cyanophyceae</taxon>
        <taxon>Nostocales</taxon>
        <taxon>Nostocaceae</taxon>
        <taxon>Nostoc</taxon>
    </lineage>
</organism>
<name>PSAF_NOSS1</name>
<feature type="signal peptide" evidence="1">
    <location>
        <begin position="1"/>
        <end position="23"/>
    </location>
</feature>
<feature type="chain" id="PRO_0000029348" description="Photosystem I reaction center subunit III">
    <location>
        <begin position="24"/>
        <end position="164"/>
    </location>
</feature>
<feature type="transmembrane region" description="Helical" evidence="2">
    <location>
        <begin position="83"/>
        <end position="103"/>
    </location>
</feature>
<feature type="transmembrane region" description="Helical" evidence="2">
    <location>
        <begin position="124"/>
        <end position="144"/>
    </location>
</feature>
<feature type="turn" evidence="5">
    <location>
        <begin position="25"/>
        <end position="27"/>
    </location>
</feature>
<feature type="helix" evidence="5">
    <location>
        <begin position="31"/>
        <end position="33"/>
    </location>
</feature>
<feature type="helix" evidence="5">
    <location>
        <begin position="35"/>
        <end position="42"/>
    </location>
</feature>
<feature type="strand" evidence="5">
    <location>
        <begin position="47"/>
        <end position="50"/>
    </location>
</feature>
<feature type="helix" evidence="5">
    <location>
        <begin position="53"/>
        <end position="61"/>
    </location>
</feature>
<feature type="strand" evidence="5">
    <location>
        <begin position="64"/>
        <end position="66"/>
    </location>
</feature>
<feature type="strand" evidence="5">
    <location>
        <begin position="72"/>
        <end position="74"/>
    </location>
</feature>
<feature type="helix" evidence="5">
    <location>
        <begin position="80"/>
        <end position="82"/>
    </location>
</feature>
<feature type="helix" evidence="5">
    <location>
        <begin position="83"/>
        <end position="111"/>
    </location>
</feature>
<feature type="helix" evidence="5">
    <location>
        <begin position="119"/>
        <end position="122"/>
    </location>
</feature>
<feature type="helix" evidence="5">
    <location>
        <begin position="126"/>
        <end position="135"/>
    </location>
</feature>
<feature type="helix" evidence="5">
    <location>
        <begin position="136"/>
        <end position="138"/>
    </location>
</feature>
<feature type="helix" evidence="5">
    <location>
        <begin position="139"/>
        <end position="148"/>
    </location>
</feature>
<feature type="turn" evidence="5">
    <location>
        <begin position="156"/>
        <end position="158"/>
    </location>
</feature>
<gene>
    <name type="primary">psaF</name>
    <name type="ordered locus">all0109</name>
</gene>
<sequence length="164" mass="17833">MRRLFALILVICLSFSFAPPAKALGADLTPCAENPAFQALAKNARNTTADPQSGQKRFERYSQALCGPEGYPHLIVDGRLDRAGDFLIPSILFLYIAGWIGWVGRAYLQAIKKDSDTEQKEIQLDLGIALPIIATGFAWPAAAVKELLSGELTAKDSEITVSPR</sequence>
<keyword id="KW-0002">3D-structure</keyword>
<keyword id="KW-0903">Direct protein sequencing</keyword>
<keyword id="KW-0472">Membrane</keyword>
<keyword id="KW-0602">Photosynthesis</keyword>
<keyword id="KW-0603">Photosystem I</keyword>
<keyword id="KW-1185">Reference proteome</keyword>
<keyword id="KW-0732">Signal</keyword>
<keyword id="KW-0793">Thylakoid</keyword>
<keyword id="KW-0812">Transmembrane</keyword>
<keyword id="KW-1133">Transmembrane helix</keyword>
<protein>
    <recommendedName>
        <fullName>Photosystem I reaction center subunit III</fullName>
    </recommendedName>
    <alternativeName>
        <fullName>PSI-F</fullName>
    </alternativeName>
</protein>
<reference key="1">
    <citation type="journal article" date="2001" name="DNA Res.">
        <title>Complete genomic sequence of the filamentous nitrogen-fixing cyanobacterium Anabaena sp. strain PCC 7120.</title>
        <authorList>
            <person name="Kaneko T."/>
            <person name="Nakamura Y."/>
            <person name="Wolk C.P."/>
            <person name="Kuritz T."/>
            <person name="Sasamoto S."/>
            <person name="Watanabe A."/>
            <person name="Iriguchi M."/>
            <person name="Ishikawa A."/>
            <person name="Kawashima K."/>
            <person name="Kimura T."/>
            <person name="Kishida Y."/>
            <person name="Kohara M."/>
            <person name="Matsumoto M."/>
            <person name="Matsuno A."/>
            <person name="Muraki A."/>
            <person name="Nakazaki N."/>
            <person name="Shimpo S."/>
            <person name="Sugimoto M."/>
            <person name="Takazawa M."/>
            <person name="Yamada M."/>
            <person name="Yasuda M."/>
            <person name="Tabata S."/>
        </authorList>
    </citation>
    <scope>NUCLEOTIDE SEQUENCE [LARGE SCALE GENOMIC DNA]</scope>
    <source>
        <strain>PCC 7120 / SAG 25.82 / UTEX 2576</strain>
    </source>
</reference>
<reference key="2">
    <citation type="journal article" date="2014" name="Proc. Natl. Acad. Sci. U.S.A.">
        <title>Attachment of phycobilisomes in an antenna-photosystem I supercomplex of cyanobacteria.</title>
        <authorList>
            <person name="Watanabe M."/>
            <person name="Semchonok D.A."/>
            <person name="Webber-Birungi M.T."/>
            <person name="Ehira S."/>
            <person name="Kondo K."/>
            <person name="Narikawa R."/>
            <person name="Ohmori M."/>
            <person name="Boekema E.J."/>
            <person name="Ikeuchi M."/>
        </authorList>
    </citation>
    <scope>PROTEIN SEQUENCE OF 24-41</scope>
    <scope>SUBUNIT</scope>
    <scope>SUBCELLULAR LOCATION</scope>
    <source>
        <strain>PCC 7120 / SAG 25.82 / UTEX 2576</strain>
    </source>
</reference>
<accession>P58564</accession>